<reference key="1">
    <citation type="journal article" date="2006" name="PLoS Genet.">
        <title>Comparative genomics of emerging human ehrlichiosis agents.</title>
        <authorList>
            <person name="Dunning Hotopp J.C."/>
            <person name="Lin M."/>
            <person name="Madupu R."/>
            <person name="Crabtree J."/>
            <person name="Angiuoli S.V."/>
            <person name="Eisen J.A."/>
            <person name="Seshadri R."/>
            <person name="Ren Q."/>
            <person name="Wu M."/>
            <person name="Utterback T.R."/>
            <person name="Smith S."/>
            <person name="Lewis M."/>
            <person name="Khouri H."/>
            <person name="Zhang C."/>
            <person name="Niu H."/>
            <person name="Lin Q."/>
            <person name="Ohashi N."/>
            <person name="Zhi N."/>
            <person name="Nelson W.C."/>
            <person name="Brinkac L.M."/>
            <person name="Dodson R.J."/>
            <person name="Rosovitz M.J."/>
            <person name="Sundaram J.P."/>
            <person name="Daugherty S.C."/>
            <person name="Davidsen T."/>
            <person name="Durkin A.S."/>
            <person name="Gwinn M.L."/>
            <person name="Haft D.H."/>
            <person name="Selengut J.D."/>
            <person name="Sullivan S.A."/>
            <person name="Zafar N."/>
            <person name="Zhou L."/>
            <person name="Benahmed F."/>
            <person name="Forberger H."/>
            <person name="Halpin R."/>
            <person name="Mulligan S."/>
            <person name="Robinson J."/>
            <person name="White O."/>
            <person name="Rikihisa Y."/>
            <person name="Tettelin H."/>
        </authorList>
    </citation>
    <scope>NUCLEOTIDE SEQUENCE [LARGE SCALE GENOMIC DNA]</scope>
    <source>
        <strain>ATCC VR-367 / Miyayama</strain>
    </source>
</reference>
<sequence>MSTIYALSTVFGKSGVAVFRISGPDALRALELLGLDIKQPRPRFVYFARLFDEQLLIDEVLVVYFASPASFTGEDVVELHSHGSIAVLRYISEKLSTLFKPAEPGEFTRRAVLNNRMDLTKAEGIIDIINSETQEQLKQASRHLSGKLAEEYNSLRDKIIKVLSYLEAYIDFPDEEIPETVLAEIQQSIVAIQCDISRYLADGKVGEKIREGFSVVIVGKPNVGKSTLFNYLAKRDLAIVTDIPGTTRDILEVRLDCHGYPVILSDTAGIQETCDAIEKMGITRALKKATEADVIVFLRDITELHLTNVRREDVANSVIERHLDRQVAALGSREHIQIDQRHVDKLIGSSDWAQEMQLNEAGVRSKNMNYPDIEERDLNLRDILDERHEEKDRSVMCHDMMQEHDPDNGECSDDVDRRFNELFTAAKKLEIPVVKVVTKGDIAPTQLSFWQDKGYICISVYKGEGMQLLLDKIFDIISSSNIEAHIITRARHRLALENALEHLRRFNTDLPIELAAEEIKLAANHIASVTGEIKLDDVLDEIFSSFCIGK</sequence>
<evidence type="ECO:0000255" key="1">
    <source>
        <dbReference type="HAMAP-Rule" id="MF_00379"/>
    </source>
</evidence>
<accession>Q2GD53</accession>
<dbReference type="EC" id="3.6.-.-" evidence="1"/>
<dbReference type="EMBL" id="CP000237">
    <property type="protein sequence ID" value="ABD46378.1"/>
    <property type="molecule type" value="Genomic_DNA"/>
</dbReference>
<dbReference type="RefSeq" id="WP_011452099.1">
    <property type="nucleotide sequence ID" value="NC_007798.1"/>
</dbReference>
<dbReference type="SMR" id="Q2GD53"/>
<dbReference type="STRING" id="222891.NSE_0717"/>
<dbReference type="KEGG" id="nse:NSE_0717"/>
<dbReference type="eggNOG" id="COG0486">
    <property type="taxonomic scope" value="Bacteria"/>
</dbReference>
<dbReference type="HOGENOM" id="CLU_019624_4_1_5"/>
<dbReference type="OrthoDB" id="9805918at2"/>
<dbReference type="Proteomes" id="UP000001942">
    <property type="component" value="Chromosome"/>
</dbReference>
<dbReference type="GO" id="GO:0005737">
    <property type="term" value="C:cytoplasm"/>
    <property type="evidence" value="ECO:0007669"/>
    <property type="project" value="UniProtKB-SubCell"/>
</dbReference>
<dbReference type="GO" id="GO:0005525">
    <property type="term" value="F:GTP binding"/>
    <property type="evidence" value="ECO:0007669"/>
    <property type="project" value="UniProtKB-UniRule"/>
</dbReference>
<dbReference type="GO" id="GO:0003924">
    <property type="term" value="F:GTPase activity"/>
    <property type="evidence" value="ECO:0007669"/>
    <property type="project" value="UniProtKB-UniRule"/>
</dbReference>
<dbReference type="GO" id="GO:0046872">
    <property type="term" value="F:metal ion binding"/>
    <property type="evidence" value="ECO:0007669"/>
    <property type="project" value="UniProtKB-KW"/>
</dbReference>
<dbReference type="GO" id="GO:0030488">
    <property type="term" value="P:tRNA methylation"/>
    <property type="evidence" value="ECO:0007669"/>
    <property type="project" value="TreeGrafter"/>
</dbReference>
<dbReference type="GO" id="GO:0002098">
    <property type="term" value="P:tRNA wobble uridine modification"/>
    <property type="evidence" value="ECO:0007669"/>
    <property type="project" value="TreeGrafter"/>
</dbReference>
<dbReference type="CDD" id="cd04164">
    <property type="entry name" value="trmE"/>
    <property type="match status" value="1"/>
</dbReference>
<dbReference type="CDD" id="cd14858">
    <property type="entry name" value="TrmE_N"/>
    <property type="match status" value="1"/>
</dbReference>
<dbReference type="Gene3D" id="3.40.50.300">
    <property type="entry name" value="P-loop containing nucleotide triphosphate hydrolases"/>
    <property type="match status" value="1"/>
</dbReference>
<dbReference type="Gene3D" id="3.30.1360.120">
    <property type="entry name" value="Probable tRNA modification gtpase trme, domain 1"/>
    <property type="match status" value="1"/>
</dbReference>
<dbReference type="Gene3D" id="1.20.120.430">
    <property type="entry name" value="tRNA modification GTPase MnmE domain 2"/>
    <property type="match status" value="1"/>
</dbReference>
<dbReference type="HAMAP" id="MF_00379">
    <property type="entry name" value="GTPase_MnmE"/>
    <property type="match status" value="1"/>
</dbReference>
<dbReference type="InterPro" id="IPR031168">
    <property type="entry name" value="G_TrmE"/>
</dbReference>
<dbReference type="InterPro" id="IPR006073">
    <property type="entry name" value="GTP-bd"/>
</dbReference>
<dbReference type="InterPro" id="IPR018948">
    <property type="entry name" value="GTP-bd_TrmE_N"/>
</dbReference>
<dbReference type="InterPro" id="IPR004520">
    <property type="entry name" value="GTPase_MnmE"/>
</dbReference>
<dbReference type="InterPro" id="IPR027368">
    <property type="entry name" value="MnmE_dom2"/>
</dbReference>
<dbReference type="InterPro" id="IPR025867">
    <property type="entry name" value="MnmE_helical"/>
</dbReference>
<dbReference type="InterPro" id="IPR027417">
    <property type="entry name" value="P-loop_NTPase"/>
</dbReference>
<dbReference type="InterPro" id="IPR005225">
    <property type="entry name" value="Small_GTP-bd"/>
</dbReference>
<dbReference type="InterPro" id="IPR027266">
    <property type="entry name" value="TrmE/GcvT_dom1"/>
</dbReference>
<dbReference type="NCBIfam" id="TIGR00450">
    <property type="entry name" value="mnmE_trmE_thdF"/>
    <property type="match status" value="1"/>
</dbReference>
<dbReference type="NCBIfam" id="NF003661">
    <property type="entry name" value="PRK05291.1-3"/>
    <property type="match status" value="1"/>
</dbReference>
<dbReference type="NCBIfam" id="TIGR00231">
    <property type="entry name" value="small_GTP"/>
    <property type="match status" value="1"/>
</dbReference>
<dbReference type="PANTHER" id="PTHR42714">
    <property type="entry name" value="TRNA MODIFICATION GTPASE GTPBP3"/>
    <property type="match status" value="1"/>
</dbReference>
<dbReference type="PANTHER" id="PTHR42714:SF2">
    <property type="entry name" value="TRNA MODIFICATION GTPASE GTPBP3, MITOCHONDRIAL"/>
    <property type="match status" value="1"/>
</dbReference>
<dbReference type="Pfam" id="PF01926">
    <property type="entry name" value="MMR_HSR1"/>
    <property type="match status" value="1"/>
</dbReference>
<dbReference type="Pfam" id="PF12631">
    <property type="entry name" value="MnmE_helical"/>
    <property type="match status" value="1"/>
</dbReference>
<dbReference type="Pfam" id="PF10396">
    <property type="entry name" value="TrmE_N"/>
    <property type="match status" value="1"/>
</dbReference>
<dbReference type="SUPFAM" id="SSF52540">
    <property type="entry name" value="P-loop containing nucleoside triphosphate hydrolases"/>
    <property type="match status" value="1"/>
</dbReference>
<dbReference type="SUPFAM" id="SSF116878">
    <property type="entry name" value="TrmE connector domain"/>
    <property type="match status" value="1"/>
</dbReference>
<dbReference type="PROSITE" id="PS51709">
    <property type="entry name" value="G_TRME"/>
    <property type="match status" value="1"/>
</dbReference>
<protein>
    <recommendedName>
        <fullName evidence="1">tRNA modification GTPase MnmE</fullName>
        <ecNumber evidence="1">3.6.-.-</ecNumber>
    </recommendedName>
</protein>
<gene>
    <name evidence="1" type="primary">mnmE</name>
    <name evidence="1" type="synonym">trmE</name>
    <name type="ordered locus">NSE_0717</name>
</gene>
<name>MNME_NEOSM</name>
<feature type="chain" id="PRO_0000345851" description="tRNA modification GTPase MnmE">
    <location>
        <begin position="1"/>
        <end position="550"/>
    </location>
</feature>
<feature type="domain" description="TrmE-type G">
    <location>
        <begin position="212"/>
        <end position="478"/>
    </location>
</feature>
<feature type="binding site" evidence="1">
    <location>
        <position position="20"/>
    </location>
    <ligand>
        <name>(6S)-5-formyl-5,6,7,8-tetrahydrofolate</name>
        <dbReference type="ChEBI" id="CHEBI:57457"/>
    </ligand>
</feature>
<feature type="binding site" evidence="1">
    <location>
        <position position="78"/>
    </location>
    <ligand>
        <name>(6S)-5-formyl-5,6,7,8-tetrahydrofolate</name>
        <dbReference type="ChEBI" id="CHEBI:57457"/>
    </ligand>
</feature>
<feature type="binding site" evidence="1">
    <location>
        <position position="116"/>
    </location>
    <ligand>
        <name>(6S)-5-formyl-5,6,7,8-tetrahydrofolate</name>
        <dbReference type="ChEBI" id="CHEBI:57457"/>
    </ligand>
</feature>
<feature type="binding site" evidence="1">
    <location>
        <begin position="222"/>
        <end position="227"/>
    </location>
    <ligand>
        <name>GTP</name>
        <dbReference type="ChEBI" id="CHEBI:37565"/>
    </ligand>
</feature>
<feature type="binding site" evidence="1">
    <location>
        <position position="222"/>
    </location>
    <ligand>
        <name>K(+)</name>
        <dbReference type="ChEBI" id="CHEBI:29103"/>
    </ligand>
</feature>
<feature type="binding site" evidence="1">
    <location>
        <position position="226"/>
    </location>
    <ligand>
        <name>Mg(2+)</name>
        <dbReference type="ChEBI" id="CHEBI:18420"/>
    </ligand>
</feature>
<feature type="binding site" evidence="1">
    <location>
        <begin position="241"/>
        <end position="247"/>
    </location>
    <ligand>
        <name>GTP</name>
        <dbReference type="ChEBI" id="CHEBI:37565"/>
    </ligand>
</feature>
<feature type="binding site" evidence="1">
    <location>
        <position position="241"/>
    </location>
    <ligand>
        <name>K(+)</name>
        <dbReference type="ChEBI" id="CHEBI:29103"/>
    </ligand>
</feature>
<feature type="binding site" evidence="1">
    <location>
        <position position="243"/>
    </location>
    <ligand>
        <name>K(+)</name>
        <dbReference type="ChEBI" id="CHEBI:29103"/>
    </ligand>
</feature>
<feature type="binding site" evidence="1">
    <location>
        <position position="246"/>
    </location>
    <ligand>
        <name>K(+)</name>
        <dbReference type="ChEBI" id="CHEBI:29103"/>
    </ligand>
</feature>
<feature type="binding site" evidence="1">
    <location>
        <position position="247"/>
    </location>
    <ligand>
        <name>Mg(2+)</name>
        <dbReference type="ChEBI" id="CHEBI:18420"/>
    </ligand>
</feature>
<feature type="binding site" evidence="1">
    <location>
        <begin position="266"/>
        <end position="269"/>
    </location>
    <ligand>
        <name>GTP</name>
        <dbReference type="ChEBI" id="CHEBI:37565"/>
    </ligand>
</feature>
<feature type="binding site" evidence="1">
    <location>
        <position position="550"/>
    </location>
    <ligand>
        <name>(6S)-5-formyl-5,6,7,8-tetrahydrofolate</name>
        <dbReference type="ChEBI" id="CHEBI:57457"/>
    </ligand>
</feature>
<keyword id="KW-0963">Cytoplasm</keyword>
<keyword id="KW-0342">GTP-binding</keyword>
<keyword id="KW-0378">Hydrolase</keyword>
<keyword id="KW-0460">Magnesium</keyword>
<keyword id="KW-0479">Metal-binding</keyword>
<keyword id="KW-0547">Nucleotide-binding</keyword>
<keyword id="KW-0630">Potassium</keyword>
<keyword id="KW-0819">tRNA processing</keyword>
<organism>
    <name type="scientific">Neorickettsia sennetsu (strain ATCC VR-367 / Miyayama)</name>
    <name type="common">Ehrlichia sennetsu</name>
    <dbReference type="NCBI Taxonomy" id="222891"/>
    <lineage>
        <taxon>Bacteria</taxon>
        <taxon>Pseudomonadati</taxon>
        <taxon>Pseudomonadota</taxon>
        <taxon>Alphaproteobacteria</taxon>
        <taxon>Rickettsiales</taxon>
        <taxon>Anaplasmataceae</taxon>
        <taxon>Neorickettsia</taxon>
    </lineage>
</organism>
<comment type="function">
    <text evidence="1">Exhibits a very high intrinsic GTPase hydrolysis rate. Involved in the addition of a carboxymethylaminomethyl (cmnm) group at the wobble position (U34) of certain tRNAs, forming tRNA-cmnm(5)s(2)U34.</text>
</comment>
<comment type="cofactor">
    <cofactor evidence="1">
        <name>K(+)</name>
        <dbReference type="ChEBI" id="CHEBI:29103"/>
    </cofactor>
    <text evidence="1">Binds 1 potassium ion per subunit.</text>
</comment>
<comment type="subunit">
    <text evidence="1">Homodimer. Heterotetramer of two MnmE and two MnmG subunits.</text>
</comment>
<comment type="subcellular location">
    <subcellularLocation>
        <location evidence="1">Cytoplasm</location>
    </subcellularLocation>
</comment>
<comment type="similarity">
    <text evidence="1">Belongs to the TRAFAC class TrmE-Era-EngA-EngB-Septin-like GTPase superfamily. TrmE GTPase family.</text>
</comment>
<proteinExistence type="inferred from homology"/>